<evidence type="ECO:0000256" key="1">
    <source>
        <dbReference type="SAM" id="MobiDB-lite"/>
    </source>
</evidence>
<evidence type="ECO:0000269" key="2">
    <source>
    </source>
</evidence>
<evidence type="ECO:0000305" key="3"/>
<organism>
    <name type="scientific">Mycosarcoma maydis</name>
    <name type="common">Corn smut fungus</name>
    <name type="synonym">Ustilago maydis</name>
    <dbReference type="NCBI Taxonomy" id="5270"/>
    <lineage>
        <taxon>Eukaryota</taxon>
        <taxon>Fungi</taxon>
        <taxon>Dikarya</taxon>
        <taxon>Basidiomycota</taxon>
        <taxon>Ustilaginomycotina</taxon>
        <taxon>Ustilaginomycetes</taxon>
        <taxon>Ustilaginales</taxon>
        <taxon>Ustilaginaceae</taxon>
        <taxon>Mycosarcoma</taxon>
    </lineage>
</organism>
<protein>
    <recommendedName>
        <fullName>DNA repair exonuclease REC1</fullName>
        <ecNumber>3.1.11.2</ecNumber>
    </recommendedName>
</protein>
<accession>P14746</accession>
<accession>A0A0D1E2G6</accession>
<accession>Q4P933</accession>
<accession>Q99110</accession>
<keyword id="KW-0227">DNA damage</keyword>
<keyword id="KW-0234">DNA repair</keyword>
<keyword id="KW-0269">Exonuclease</keyword>
<keyword id="KW-0378">Hydrolase</keyword>
<keyword id="KW-0540">Nuclease</keyword>
<keyword id="KW-0539">Nucleus</keyword>
<keyword id="KW-1185">Reference proteome</keyword>
<dbReference type="EC" id="3.1.11.2"/>
<dbReference type="EMBL" id="X17663">
    <property type="protein sequence ID" value="CAA35660.1"/>
    <property type="status" value="ALT_SEQ"/>
    <property type="molecule type" value="Genomic_DNA"/>
</dbReference>
<dbReference type="EMBL" id="U01836">
    <property type="protein sequence ID" value="AAB60310.1"/>
    <property type="molecule type" value="Genomic_DNA"/>
</dbReference>
<dbReference type="EMBL" id="CM003147">
    <property type="protein sequence ID" value="KIS68815.1"/>
    <property type="molecule type" value="Genomic_DNA"/>
</dbReference>
<dbReference type="PIR" id="S06912">
    <property type="entry name" value="RGUS1M"/>
</dbReference>
<dbReference type="RefSeq" id="XP_011389835.1">
    <property type="nucleotide sequence ID" value="XM_011391533.1"/>
</dbReference>
<dbReference type="SMR" id="P14746"/>
<dbReference type="STRING" id="237631.P14746"/>
<dbReference type="EnsemblFungi" id="KIS68815">
    <property type="protein sequence ID" value="KIS68815"/>
    <property type="gene ID" value="UMAG_11016"/>
</dbReference>
<dbReference type="GeneID" id="23566952"/>
<dbReference type="KEGG" id="uma:UMAG_11016"/>
<dbReference type="VEuPathDB" id="FungiDB:UMAG_11016"/>
<dbReference type="eggNOG" id="KOG3194">
    <property type="taxonomic scope" value="Eukaryota"/>
</dbReference>
<dbReference type="InParanoid" id="P14746"/>
<dbReference type="OrthoDB" id="337581at2759"/>
<dbReference type="Proteomes" id="UP000000561">
    <property type="component" value="Chromosome 8"/>
</dbReference>
<dbReference type="GO" id="GO:0030896">
    <property type="term" value="C:checkpoint clamp complex"/>
    <property type="evidence" value="ECO:0000318"/>
    <property type="project" value="GO_Central"/>
</dbReference>
<dbReference type="GO" id="GO:0008311">
    <property type="term" value="F:double-stranded DNA 3'-5' DNA exonuclease activity"/>
    <property type="evidence" value="ECO:0007669"/>
    <property type="project" value="UniProtKB-EC"/>
</dbReference>
<dbReference type="GO" id="GO:0000077">
    <property type="term" value="P:DNA damage checkpoint signaling"/>
    <property type="evidence" value="ECO:0000318"/>
    <property type="project" value="GO_Central"/>
</dbReference>
<dbReference type="GO" id="GO:0006281">
    <property type="term" value="P:DNA repair"/>
    <property type="evidence" value="ECO:0000318"/>
    <property type="project" value="GO_Central"/>
</dbReference>
<dbReference type="Gene3D" id="3.70.10.10">
    <property type="match status" value="2"/>
</dbReference>
<dbReference type="InterPro" id="IPR003021">
    <property type="entry name" value="Rad1_Rec1_Rad17"/>
</dbReference>
<dbReference type="InterPro" id="IPR003027">
    <property type="entry name" value="Rec1_exonuc_Ustilaginaceae"/>
</dbReference>
<dbReference type="PANTHER" id="PTHR10870">
    <property type="entry name" value="CELL CYCLE CHECKPOINT PROTEIN RAD1"/>
    <property type="match status" value="1"/>
</dbReference>
<dbReference type="PANTHER" id="PTHR10870:SF0">
    <property type="entry name" value="CELL CYCLE CHECKPOINT PROTEIN RAD1"/>
    <property type="match status" value="1"/>
</dbReference>
<dbReference type="Pfam" id="PF02144">
    <property type="entry name" value="Rad1"/>
    <property type="match status" value="1"/>
</dbReference>
<dbReference type="PRINTS" id="PR01245">
    <property type="entry name" value="RAD1REC1"/>
</dbReference>
<dbReference type="PRINTS" id="PR01247">
    <property type="entry name" value="RECEXONCLASE"/>
</dbReference>
<sequence>MPAEGACDAASLMTLTATLSDVTGLANLLKSVAIQTHAVVIASSSGLEIITELNRTLQAHAYLYSHMFDSYRFENAQDDVRGSTSLQARSRPKKRSKLTSKHAETADSQSSAASSDHESGQSQAHTKKRFRANSHSYAQEADRVHDEPDSVSFEVNLQTWISCLNIFGGVGPSRPHSSSSGLPGFRPEQGSAEAPPGGRGYQRTRYGVADAYGAERGTSVERGFDRNPFSSSAKATRMKLSYQGHGNPLVLELEQDANVLTRVSMSTYEPSFLTDMVFEPQNMVAQVIVASELMQSAFTEIDASCKKLSILITSPHSLSTYDGDQRTEAPAPTNRNTSASMLKFRAISDTGSSEMEFPASLTSSDPTGVIEKFVALPGSSEQWYDFTLLSRTMSVLRSSIKTSLRMDEAGLISFQFMMPKYRRAAAAGAPLTNAAAGQAAHEDEQDAFCEFLCCPLDTSTLIV</sequence>
<proteinExistence type="inferred from homology"/>
<name>REC1_MYCMD</name>
<gene>
    <name type="primary">REC1</name>
    <name type="ORF">UMAG_11016</name>
</gene>
<comment type="function">
    <text evidence="2">Plays a central role in regulating the genetic system of this fungus. Has a 3'--&gt;5' exonuclease activity.</text>
</comment>
<comment type="catalytic activity">
    <reaction>
        <text>Exonucleolytic cleavage in the 3'- to 5'-direction to yield nucleoside 5'-phosphates.</text>
        <dbReference type="EC" id="3.1.11.2"/>
    </reaction>
</comment>
<comment type="subcellular location">
    <subcellularLocation>
        <location evidence="3">Nucleus</location>
    </subcellularLocation>
</comment>
<comment type="disruption phenotype">
    <text evidence="2">Cells are very sensitive to UV light.</text>
</comment>
<comment type="similarity">
    <text evidence="3">Belongs to the rad1 family.</text>
</comment>
<comment type="sequence caution" evidence="3">
    <conflict type="erroneous gene model prediction">
        <sequence resource="EMBL-CDS" id="CAA35660"/>
    </conflict>
</comment>
<reference key="1">
    <citation type="journal article" date="1989" name="Nucleic Acids Res.">
        <title>Nucleotide sequence of the REC1 gene of Ustilago maydis.</title>
        <authorList>
            <person name="Holden D.W."/>
            <person name="Spanos A."/>
            <person name="Banks G.R."/>
        </authorList>
    </citation>
    <scope>NUCLEOTIDE SEQUENCE [GENOMIC DNA]</scope>
</reference>
<reference key="2">
    <citation type="journal article" date="1994" name="J. Biol. Chem.">
        <title>The REC1 gene of Ustilago maydis involved in the cellular response to DNA damage encodes an exonuclease.</title>
        <authorList>
            <person name="Thelen M.P."/>
            <person name="Onel K."/>
            <person name="Holloman W.K."/>
        </authorList>
    </citation>
    <scope>NUCLEOTIDE SEQUENCE [GENOMIC DNA]</scope>
    <scope>FUNCTION</scope>
    <scope>DISRUPTION PHENOTYPE</scope>
</reference>
<reference key="3">
    <citation type="journal article" date="2006" name="Nature">
        <title>Insights from the genome of the biotrophic fungal plant pathogen Ustilago maydis.</title>
        <authorList>
            <person name="Kaemper J."/>
            <person name="Kahmann R."/>
            <person name="Boelker M."/>
            <person name="Ma L.-J."/>
            <person name="Brefort T."/>
            <person name="Saville B.J."/>
            <person name="Banuett F."/>
            <person name="Kronstad J.W."/>
            <person name="Gold S.E."/>
            <person name="Mueller O."/>
            <person name="Perlin M.H."/>
            <person name="Woesten H.A.B."/>
            <person name="de Vries R."/>
            <person name="Ruiz-Herrera J."/>
            <person name="Reynaga-Pena C.G."/>
            <person name="Snetselaar K."/>
            <person name="McCann M."/>
            <person name="Perez-Martin J."/>
            <person name="Feldbruegge M."/>
            <person name="Basse C.W."/>
            <person name="Steinberg G."/>
            <person name="Ibeas J.I."/>
            <person name="Holloman W."/>
            <person name="Guzman P."/>
            <person name="Farman M.L."/>
            <person name="Stajich J.E."/>
            <person name="Sentandreu R."/>
            <person name="Gonzalez-Prieto J.M."/>
            <person name="Kennell J.C."/>
            <person name="Molina L."/>
            <person name="Schirawski J."/>
            <person name="Mendoza-Mendoza A."/>
            <person name="Greilinger D."/>
            <person name="Muench K."/>
            <person name="Roessel N."/>
            <person name="Scherer M."/>
            <person name="Vranes M."/>
            <person name="Ladendorf O."/>
            <person name="Vincon V."/>
            <person name="Fuchs U."/>
            <person name="Sandrock B."/>
            <person name="Meng S."/>
            <person name="Ho E.C.H."/>
            <person name="Cahill M.J."/>
            <person name="Boyce K.J."/>
            <person name="Klose J."/>
            <person name="Klosterman S.J."/>
            <person name="Deelstra H.J."/>
            <person name="Ortiz-Castellanos L."/>
            <person name="Li W."/>
            <person name="Sanchez-Alonso P."/>
            <person name="Schreier P.H."/>
            <person name="Haeuser-Hahn I."/>
            <person name="Vaupel M."/>
            <person name="Koopmann E."/>
            <person name="Friedrich G."/>
            <person name="Voss H."/>
            <person name="Schlueter T."/>
            <person name="Margolis J."/>
            <person name="Platt D."/>
            <person name="Swimmer C."/>
            <person name="Gnirke A."/>
            <person name="Chen F."/>
            <person name="Vysotskaia V."/>
            <person name="Mannhaupt G."/>
            <person name="Gueldener U."/>
            <person name="Muensterkoetter M."/>
            <person name="Haase D."/>
            <person name="Oesterheld M."/>
            <person name="Mewes H.-W."/>
            <person name="Mauceli E.W."/>
            <person name="DeCaprio D."/>
            <person name="Wade C.M."/>
            <person name="Butler J."/>
            <person name="Young S.K."/>
            <person name="Jaffe D.B."/>
            <person name="Calvo S.E."/>
            <person name="Nusbaum C."/>
            <person name="Galagan J.E."/>
            <person name="Birren B.W."/>
        </authorList>
    </citation>
    <scope>NUCLEOTIDE SEQUENCE [LARGE SCALE GENOMIC DNA]</scope>
    <source>
        <strain>DSM 14603 / FGSC 9021 / UM521</strain>
    </source>
</reference>
<reference key="4">
    <citation type="submission" date="2014-09" db="EMBL/GenBank/DDBJ databases">
        <authorList>
            <person name="Gueldener U."/>
            <person name="Muensterkoetter M."/>
            <person name="Walter M.C."/>
            <person name="Mannhaupt G."/>
            <person name="Kahmann R."/>
        </authorList>
    </citation>
    <scope>GENOME REANNOTATION</scope>
    <source>
        <strain>DSM 14603 / FGSC 9021 / UM521</strain>
    </source>
</reference>
<reference key="5">
    <citation type="journal article" date="1995" name="Mol. Cell. Biol.">
        <title>Mutation avoidance and DNA repair proficiency in Ustilago maydis are differentially lost with progressive truncation of the REC1 gene product.</title>
        <authorList>
            <person name="Onel K."/>
            <person name="Thelen M.P."/>
            <person name="Ferguson D.O."/>
            <person name="Bennett R.L."/>
            <person name="Holloman W.K."/>
        </authorList>
    </citation>
    <scope>IDENTIFICATION OF INTRON</scope>
</reference>
<feature type="chain" id="PRO_0000097223" description="DNA repair exonuclease REC1">
    <location>
        <begin position="1"/>
        <end position="463"/>
    </location>
</feature>
<feature type="region of interest" description="Disordered" evidence="1">
    <location>
        <begin position="81"/>
        <end position="128"/>
    </location>
</feature>
<feature type="region of interest" description="Disordered" evidence="1">
    <location>
        <begin position="172"/>
        <end position="203"/>
    </location>
</feature>
<feature type="compositionally biased region" description="Basic residues" evidence="1">
    <location>
        <begin position="90"/>
        <end position="100"/>
    </location>
</feature>
<feature type="sequence conflict" description="In Ref. 1; CAA35660 and 2; AAB60310." evidence="3" ref="1 2">
    <original>N</original>
    <variation>K</variation>
    <location>
        <position position="334"/>
    </location>
</feature>
<feature type="sequence conflict" description="In Ref. 1; CAA35660." evidence="3" ref="1">
    <original>E</original>
    <variation>Q</variation>
    <location>
        <position position="354"/>
    </location>
</feature>